<feature type="chain" id="PRO_0000247674" description="Centromere protein U">
    <location>
        <begin position="1"/>
        <end position="410"/>
    </location>
</feature>
<feature type="region of interest" description="Disordered" evidence="5">
    <location>
        <begin position="1"/>
        <end position="72"/>
    </location>
</feature>
<feature type="region of interest" description="Disordered" evidence="5">
    <location>
        <begin position="87"/>
        <end position="228"/>
    </location>
</feature>
<feature type="coiled-coil region" evidence="4">
    <location>
        <begin position="289"/>
        <end position="352"/>
    </location>
</feature>
<feature type="short sequence motif" description="Nuclear localization signal" evidence="4">
    <location>
        <begin position="4"/>
        <end position="21"/>
    </location>
</feature>
<feature type="short sequence motif" description="Nuclear localization signal" evidence="4">
    <location>
        <begin position="295"/>
        <end position="312"/>
    </location>
</feature>
<feature type="compositionally biased region" description="Basic residues" evidence="5">
    <location>
        <begin position="28"/>
        <end position="38"/>
    </location>
</feature>
<feature type="compositionally biased region" description="Polar residues" evidence="5">
    <location>
        <begin position="101"/>
        <end position="115"/>
    </location>
</feature>
<feature type="compositionally biased region" description="Basic and acidic residues" evidence="5">
    <location>
        <begin position="138"/>
        <end position="149"/>
    </location>
</feature>
<feature type="compositionally biased region" description="Low complexity" evidence="5">
    <location>
        <begin position="158"/>
        <end position="169"/>
    </location>
</feature>
<feature type="compositionally biased region" description="Basic residues" evidence="5">
    <location>
        <begin position="200"/>
        <end position="218"/>
    </location>
</feature>
<feature type="modified residue" description="Phosphothreonine; by PLK1" evidence="2">
    <location>
        <position position="73"/>
    </location>
</feature>
<feature type="modified residue" description="Phosphoserine" evidence="2">
    <location>
        <position position="105"/>
    </location>
</feature>
<feature type="modified residue" description="Phosphoserine" evidence="3">
    <location>
        <position position="110"/>
    </location>
</feature>
<feature type="modified residue" description="Phosphoserine" evidence="3">
    <location>
        <position position="114"/>
    </location>
</feature>
<feature type="modified residue" description="Phosphoserine" evidence="2">
    <location>
        <position position="130"/>
    </location>
</feature>
<feature type="modified residue" description="Phosphoserine" evidence="2">
    <location>
        <position position="133"/>
    </location>
</feature>
<feature type="modified residue" description="Phosphoserine" evidence="2">
    <location>
        <position position="135"/>
    </location>
</feature>
<feature type="modified residue" description="Phosphoserine" evidence="2">
    <location>
        <position position="186"/>
    </location>
</feature>
<feature type="modified residue" description="Phosphothreonine" evidence="3">
    <location>
        <position position="191"/>
    </location>
</feature>
<feature type="modified residue" description="Phosphoserine" evidence="2">
    <location>
        <position position="224"/>
    </location>
</feature>
<feature type="cross-link" description="Glycyl lysine isopeptide (Lys-Gly) (interchain with G-Cter in SUMO2)" evidence="2">
    <location>
        <position position="179"/>
    </location>
</feature>
<name>CENPU_RAT</name>
<keyword id="KW-0137">Centromere</keyword>
<keyword id="KW-0158">Chromosome</keyword>
<keyword id="KW-0175">Coiled coil</keyword>
<keyword id="KW-0963">Cytoplasm</keyword>
<keyword id="KW-1017">Isopeptide bond</keyword>
<keyword id="KW-0995">Kinetochore</keyword>
<keyword id="KW-0539">Nucleus</keyword>
<keyword id="KW-0597">Phosphoprotein</keyword>
<keyword id="KW-1185">Reference proteome</keyword>
<keyword id="KW-0678">Repressor</keyword>
<keyword id="KW-0804">Transcription</keyword>
<keyword id="KW-0805">Transcription regulation</keyword>
<keyword id="KW-0832">Ubl conjugation</keyword>
<protein>
    <recommendedName>
        <fullName>Centromere protein U</fullName>
        <shortName>CENP-U</shortName>
    </recommendedName>
    <alternativeName>
        <fullName>MLF1-interacting protein</fullName>
    </alternativeName>
</protein>
<comment type="function">
    <text evidence="1">Component of the CENPA-NAC (nucleosome-associated) complex, a complex that plays a central role in assembly of kinetochore proteins, mitotic progression and chromosome segregation. The CENPA-NAC complex recruits the CENPA-CAD (nucleosome distal) complex and may be involved in incorporation of newly synthesized CENPA into centromeres. Plays an important role in the correct PLK1 localization to the mitotic kinetochores. A scaffold protein responsible for the initial recruitment and maintenance of the kinetochore PLK1 population until its degradation. Involved in transcriptional repression (By similarity).</text>
</comment>
<comment type="subunit">
    <text evidence="1">Component of the CENPA-NAC complex, at least composed of CENPA, CENPC, CENPH, CENPM, CENPN, CENPT and CENPU. The CENPA-NAC complex interacts with the CENPA-CAD complex, composed of CENPI, CENPK, CENPL, CENPO, CENPP, CENPQ, CENPR and CENPS. Interacts with MLF1 (By similarity).</text>
</comment>
<comment type="subcellular location">
    <subcellularLocation>
        <location evidence="6">Cytoplasm</location>
    </subcellularLocation>
    <subcellularLocation>
        <location evidence="6">Nucleus</location>
    </subcellularLocation>
    <subcellularLocation>
        <location evidence="1">Chromosome</location>
        <location evidence="1">Centromere</location>
        <location evidence="1">Kinetochore</location>
    </subcellularLocation>
    <text evidence="1">Localizes in the kinetochore domain of centromeres. Colocalizes with PLK1 at the interzone between the inner and the outer kinetochore plates (By similarity).</text>
</comment>
<comment type="tissue specificity">
    <text evidence="6">Expressed at high levels in glioblastoma cell lines. Up-regulated in GBM (glioblastoma multiforme) tumors. Significantly increased in both the tumor core as well as the contralateral striatum and cortex in gliomas.</text>
</comment>
<comment type="PTM">
    <text evidence="1">Phosphorylated by PLK1 at Thr-73, creating a self-tethering site that specifically interacts with the polo-box domain of PLK1.</text>
</comment>
<comment type="similarity">
    <text evidence="7">Belongs to the CENP-U/AME1 family.</text>
</comment>
<proteinExistence type="evidence at transcript level"/>
<accession>Q4V8G7</accession>
<organism>
    <name type="scientific">Rattus norvegicus</name>
    <name type="common">Rat</name>
    <dbReference type="NCBI Taxonomy" id="10116"/>
    <lineage>
        <taxon>Eukaryota</taxon>
        <taxon>Metazoa</taxon>
        <taxon>Chordata</taxon>
        <taxon>Craniata</taxon>
        <taxon>Vertebrata</taxon>
        <taxon>Euteleostomi</taxon>
        <taxon>Mammalia</taxon>
        <taxon>Eutheria</taxon>
        <taxon>Euarchontoglires</taxon>
        <taxon>Glires</taxon>
        <taxon>Rodentia</taxon>
        <taxon>Myomorpha</taxon>
        <taxon>Muroidea</taxon>
        <taxon>Muridae</taxon>
        <taxon>Murinae</taxon>
        <taxon>Rattus</taxon>
    </lineage>
</organism>
<evidence type="ECO:0000250" key="1"/>
<evidence type="ECO:0000250" key="2">
    <source>
        <dbReference type="UniProtKB" id="Q71F23"/>
    </source>
</evidence>
<evidence type="ECO:0000250" key="3">
    <source>
        <dbReference type="UniProtKB" id="Q8C4M7"/>
    </source>
</evidence>
<evidence type="ECO:0000255" key="4"/>
<evidence type="ECO:0000256" key="5">
    <source>
        <dbReference type="SAM" id="MobiDB-lite"/>
    </source>
</evidence>
<evidence type="ECO:0000269" key="6">
    <source>
    </source>
</evidence>
<evidence type="ECO:0000305" key="7"/>
<gene>
    <name type="primary">Cenpu</name>
    <name type="synonym">Mlf1ip</name>
</gene>
<sequence length="410" mass="46801">MAARRSLRYSGDPGAKRSRNTLGSTNSRKQKAGQKPKRKDVFDFPNTSDVSSMLRELEEEEPYETFDPPLHSTAIYTDDELYKHCVSSTSPATHRGKESRNLNPSENEASGNDSIKLSAKKPRRKLEPISDESDSSEDNVRRSVSIERPRARKPPAAPAAASSSSSPSERPAEQVTPRKTSFPQPSAVEETPAAQSQLKTQKKVRPSPGRRKRPRRGSTHSDASESMHILCLEGKRQSDVMELDVVLSAFERTFLDYKQRVESESCNQAISKFYFKIKGELIRMLKEVQMLKALKRKNTKIISNMEKKRQRLIDVQDELIRLEPQLKQLQTKYDDLKKRKSALKNSKHFLSNLKQLYQDYSNVREEEPKEKEKYDSSSLPALLFKARSILGAEKHLKTINYHLGKLLKQD</sequence>
<dbReference type="EMBL" id="BC097399">
    <property type="protein sequence ID" value="AAH97399.1"/>
    <property type="molecule type" value="mRNA"/>
</dbReference>
<dbReference type="RefSeq" id="NP_001020844.1">
    <property type="nucleotide sequence ID" value="NM_001025673.1"/>
</dbReference>
<dbReference type="SMR" id="Q4V8G7"/>
<dbReference type="FunCoup" id="Q4V8G7">
    <property type="interactions" value="952"/>
</dbReference>
<dbReference type="STRING" id="10116.ENSRNOP00000046417"/>
<dbReference type="iPTMnet" id="Q4V8G7"/>
<dbReference type="PhosphoSitePlus" id="Q4V8G7"/>
<dbReference type="PaxDb" id="10116-ENSRNOP00000046417"/>
<dbReference type="Ensembl" id="ENSRNOT00000041596.5">
    <property type="protein sequence ID" value="ENSRNOP00000046417.3"/>
    <property type="gene ID" value="ENSRNOG00000022261.6"/>
</dbReference>
<dbReference type="GeneID" id="306464"/>
<dbReference type="KEGG" id="rno:306464"/>
<dbReference type="AGR" id="RGD:1562566"/>
<dbReference type="CTD" id="79682"/>
<dbReference type="RGD" id="1562566">
    <property type="gene designation" value="Cenpu"/>
</dbReference>
<dbReference type="eggNOG" id="ENOG502S1IM">
    <property type="taxonomic scope" value="Eukaryota"/>
</dbReference>
<dbReference type="GeneTree" id="ENSGT00390000015511"/>
<dbReference type="HOGENOM" id="CLU_057340_1_0_1"/>
<dbReference type="InParanoid" id="Q4V8G7"/>
<dbReference type="OMA" id="NTVGRTH"/>
<dbReference type="OrthoDB" id="76715at9989"/>
<dbReference type="PhylomeDB" id="Q4V8G7"/>
<dbReference type="TreeFam" id="TF330780"/>
<dbReference type="Reactome" id="R-RNO-141444">
    <property type="pathway name" value="Amplification of signal from unattached kinetochores via a MAD2 inhibitory signal"/>
</dbReference>
<dbReference type="Reactome" id="R-RNO-2467813">
    <property type="pathway name" value="Separation of Sister Chromatids"/>
</dbReference>
<dbReference type="Reactome" id="R-RNO-2500257">
    <property type="pathway name" value="Resolution of Sister Chromatid Cohesion"/>
</dbReference>
<dbReference type="Reactome" id="R-RNO-5663220">
    <property type="pathway name" value="RHO GTPases Activate Formins"/>
</dbReference>
<dbReference type="Reactome" id="R-RNO-606279">
    <property type="pathway name" value="Deposition of new CENPA-containing nucleosomes at the centromere"/>
</dbReference>
<dbReference type="Reactome" id="R-RNO-68877">
    <property type="pathway name" value="Mitotic Prometaphase"/>
</dbReference>
<dbReference type="Reactome" id="R-RNO-9648025">
    <property type="pathway name" value="EML4 and NUDC in mitotic spindle formation"/>
</dbReference>
<dbReference type="PRO" id="PR:Q4V8G7"/>
<dbReference type="Proteomes" id="UP000002494">
    <property type="component" value="Chromosome 16"/>
</dbReference>
<dbReference type="Bgee" id="ENSRNOG00000022261">
    <property type="expression patterns" value="Expressed in testis and 17 other cell types or tissues"/>
</dbReference>
<dbReference type="GO" id="GO:0005737">
    <property type="term" value="C:cytoplasm"/>
    <property type="evidence" value="ECO:0000266"/>
    <property type="project" value="RGD"/>
</dbReference>
<dbReference type="GO" id="GO:0000939">
    <property type="term" value="C:inner kinetochore"/>
    <property type="evidence" value="ECO:0000266"/>
    <property type="project" value="RGD"/>
</dbReference>
<dbReference type="GO" id="GO:0005634">
    <property type="term" value="C:nucleus"/>
    <property type="evidence" value="ECO:0000266"/>
    <property type="project" value="RGD"/>
</dbReference>
<dbReference type="GO" id="GO:0043009">
    <property type="term" value="P:chordate embryonic development"/>
    <property type="evidence" value="ECO:0000266"/>
    <property type="project" value="RGD"/>
</dbReference>
<dbReference type="InterPro" id="IPR025214">
    <property type="entry name" value="CENP-U"/>
</dbReference>
<dbReference type="PANTHER" id="PTHR32222">
    <property type="entry name" value="CENTROMERE PROTEIN U"/>
    <property type="match status" value="1"/>
</dbReference>
<dbReference type="PANTHER" id="PTHR32222:SF1">
    <property type="entry name" value="CENTROMERE PROTEIN U"/>
    <property type="match status" value="1"/>
</dbReference>
<dbReference type="Pfam" id="PF13097">
    <property type="entry name" value="CENP-U"/>
    <property type="match status" value="1"/>
</dbReference>
<reference key="1">
    <citation type="journal article" date="2004" name="Genome Res.">
        <title>The status, quality, and expansion of the NIH full-length cDNA project: the Mammalian Gene Collection (MGC).</title>
        <authorList>
            <consortium name="The MGC Project Team"/>
        </authorList>
    </citation>
    <scope>NUCLEOTIDE SEQUENCE [LARGE SCALE MRNA]</scope>
    <source>
        <tissue>Testis</tissue>
    </source>
</reference>
<reference key="2">
    <citation type="journal article" date="2005" name="Brain Res.">
        <title>Regulation of myeloid leukemia factor-1 interacting protein (MLF1IP) expression in glioblastoma.</title>
        <authorList>
            <person name="Hanissian S.H."/>
            <person name="Teng B."/>
            <person name="Akbar U."/>
            <person name="Janjetovic Z."/>
            <person name="Zhou Q."/>
            <person name="Duntsch C."/>
            <person name="Robertson J.H."/>
        </authorList>
    </citation>
    <scope>SUBCELLULAR LOCATION</scope>
    <scope>TISSUE SPECIFICITY</scope>
</reference>